<protein>
    <recommendedName>
        <fullName evidence="1">RNA chaperone ProQ</fullName>
    </recommendedName>
</protein>
<feature type="chain" id="PRO_0000303106" description="RNA chaperone ProQ">
    <location>
        <begin position="1"/>
        <end position="237"/>
    </location>
</feature>
<feature type="region of interest" description="Disordered" evidence="2">
    <location>
        <begin position="106"/>
        <end position="188"/>
    </location>
</feature>
<feature type="compositionally biased region" description="Basic and acidic residues" evidence="2">
    <location>
        <begin position="146"/>
        <end position="158"/>
    </location>
</feature>
<gene>
    <name evidence="1" type="primary">proQ</name>
    <name type="ordered locus">YPDSF_1744</name>
</gene>
<organism>
    <name type="scientific">Yersinia pestis (strain Pestoides F)</name>
    <dbReference type="NCBI Taxonomy" id="386656"/>
    <lineage>
        <taxon>Bacteria</taxon>
        <taxon>Pseudomonadati</taxon>
        <taxon>Pseudomonadota</taxon>
        <taxon>Gammaproteobacteria</taxon>
        <taxon>Enterobacterales</taxon>
        <taxon>Yersiniaceae</taxon>
        <taxon>Yersinia</taxon>
    </lineage>
</organism>
<sequence length="237" mass="26498">MENQPKLNSSKEVIAFLAERFPLCFTAEGEARPLKIGIFQDLVERVQGEENLSKTQLRSALRLYTSSWRYLYGVKVGAERVDLDGNPCGVLEEQHVEHARKQLEEAKARVQAQRAEQQAKKREAAIAAGETPEPRRPRPAGKKPAPRREAGAAPENRKPRQSPRPQQVRPPRPQVEENQPRPVPVTDISKLQIGQEIKVRAGKSAMDATVLEIAKDGVRVQLSSGLAMIVRAEHLQF</sequence>
<reference key="1">
    <citation type="submission" date="2007-02" db="EMBL/GenBank/DDBJ databases">
        <title>Complete sequence of chromosome of Yersinia pestis Pestoides F.</title>
        <authorList>
            <consortium name="US DOE Joint Genome Institute"/>
            <person name="Copeland A."/>
            <person name="Lucas S."/>
            <person name="Lapidus A."/>
            <person name="Barry K."/>
            <person name="Detter J.C."/>
            <person name="Glavina del Rio T."/>
            <person name="Hammon N."/>
            <person name="Israni S."/>
            <person name="Dalin E."/>
            <person name="Tice H."/>
            <person name="Pitluck S."/>
            <person name="Di Bartolo G."/>
            <person name="Chain P."/>
            <person name="Malfatti S."/>
            <person name="Shin M."/>
            <person name="Vergez L."/>
            <person name="Schmutz J."/>
            <person name="Larimer F."/>
            <person name="Land M."/>
            <person name="Hauser L."/>
            <person name="Worsham P."/>
            <person name="Chu M."/>
            <person name="Bearden S."/>
            <person name="Garcia E."/>
            <person name="Richardson P."/>
        </authorList>
    </citation>
    <scope>NUCLEOTIDE SEQUENCE [LARGE SCALE GENOMIC DNA]</scope>
    <source>
        <strain>Pestoides F</strain>
    </source>
</reference>
<name>PROQ_YERPP</name>
<keyword id="KW-0143">Chaperone</keyword>
<keyword id="KW-0963">Cytoplasm</keyword>
<keyword id="KW-0694">RNA-binding</keyword>
<accession>A4TLG7</accession>
<comment type="function">
    <text evidence="1">RNA chaperone with significant RNA binding, RNA strand exchange and RNA duplexing activities. May regulate ProP activity through an RNA-based, post-transcriptional mechanism.</text>
</comment>
<comment type="subcellular location">
    <subcellularLocation>
        <location evidence="1">Cytoplasm</location>
    </subcellularLocation>
</comment>
<comment type="similarity">
    <text evidence="1">Belongs to the ProQ family.</text>
</comment>
<proteinExistence type="inferred from homology"/>
<evidence type="ECO:0000255" key="1">
    <source>
        <dbReference type="HAMAP-Rule" id="MF_00749"/>
    </source>
</evidence>
<evidence type="ECO:0000256" key="2">
    <source>
        <dbReference type="SAM" id="MobiDB-lite"/>
    </source>
</evidence>
<dbReference type="EMBL" id="CP000668">
    <property type="protein sequence ID" value="ABP40129.1"/>
    <property type="molecule type" value="Genomic_DNA"/>
</dbReference>
<dbReference type="RefSeq" id="WP_002210849.1">
    <property type="nucleotide sequence ID" value="NZ_CP009715.1"/>
</dbReference>
<dbReference type="SMR" id="A4TLG7"/>
<dbReference type="GeneID" id="96665860"/>
<dbReference type="KEGG" id="ypp:YPDSF_1744"/>
<dbReference type="PATRIC" id="fig|386656.14.peg.3192"/>
<dbReference type="GO" id="GO:0005829">
    <property type="term" value="C:cytosol"/>
    <property type="evidence" value="ECO:0007669"/>
    <property type="project" value="TreeGrafter"/>
</dbReference>
<dbReference type="GO" id="GO:0033592">
    <property type="term" value="F:RNA strand annealing activity"/>
    <property type="evidence" value="ECO:0007669"/>
    <property type="project" value="UniProtKB-UniRule"/>
</dbReference>
<dbReference type="GO" id="GO:0034057">
    <property type="term" value="F:RNA strand-exchange activity"/>
    <property type="evidence" value="ECO:0007669"/>
    <property type="project" value="UniProtKB-UniRule"/>
</dbReference>
<dbReference type="GO" id="GO:0010608">
    <property type="term" value="P:post-transcriptional regulation of gene expression"/>
    <property type="evidence" value="ECO:0007669"/>
    <property type="project" value="InterPro"/>
</dbReference>
<dbReference type="FunFam" id="1.10.1710.10:FF:000001">
    <property type="entry name" value="RNA chaperone ProQ"/>
    <property type="match status" value="1"/>
</dbReference>
<dbReference type="Gene3D" id="1.10.1710.10">
    <property type="entry name" value="ProQ/FinO domain"/>
    <property type="match status" value="1"/>
</dbReference>
<dbReference type="HAMAP" id="MF_00749">
    <property type="entry name" value="ProQ"/>
    <property type="match status" value="1"/>
</dbReference>
<dbReference type="InterPro" id="IPR023529">
    <property type="entry name" value="ProQ"/>
</dbReference>
<dbReference type="InterPro" id="IPR016103">
    <property type="entry name" value="ProQ/FinO"/>
</dbReference>
<dbReference type="InterPro" id="IPR036442">
    <property type="entry name" value="ProQ/FinO_sf"/>
</dbReference>
<dbReference type="InterPro" id="IPR035236">
    <property type="entry name" value="ProQ_C"/>
</dbReference>
<dbReference type="NCBIfam" id="NF003434">
    <property type="entry name" value="PRK04950.1"/>
    <property type="match status" value="1"/>
</dbReference>
<dbReference type="PANTHER" id="PTHR38106">
    <property type="entry name" value="RNA CHAPERONE PROQ"/>
    <property type="match status" value="1"/>
</dbReference>
<dbReference type="PANTHER" id="PTHR38106:SF1">
    <property type="entry name" value="RNA CHAPERONE PROQ"/>
    <property type="match status" value="1"/>
</dbReference>
<dbReference type="Pfam" id="PF04352">
    <property type="entry name" value="ProQ"/>
    <property type="match status" value="1"/>
</dbReference>
<dbReference type="Pfam" id="PF17516">
    <property type="entry name" value="ProQ_C"/>
    <property type="match status" value="1"/>
</dbReference>
<dbReference type="SMART" id="SM00945">
    <property type="entry name" value="ProQ"/>
    <property type="match status" value="1"/>
</dbReference>
<dbReference type="SUPFAM" id="SSF48657">
    <property type="entry name" value="FinO-like"/>
    <property type="match status" value="1"/>
</dbReference>